<comment type="function">
    <text evidence="1">PPIases accelerate the folding of proteins. It catalyzes the cis-trans isomerization of proline imidic peptide bonds in oligopeptides (By similarity).</text>
</comment>
<comment type="catalytic activity">
    <reaction>
        <text>[protein]-peptidylproline (omega=180) = [protein]-peptidylproline (omega=0)</text>
        <dbReference type="Rhea" id="RHEA:16237"/>
        <dbReference type="Rhea" id="RHEA-COMP:10747"/>
        <dbReference type="Rhea" id="RHEA-COMP:10748"/>
        <dbReference type="ChEBI" id="CHEBI:83833"/>
        <dbReference type="ChEBI" id="CHEBI:83834"/>
        <dbReference type="EC" id="5.2.1.8"/>
    </reaction>
</comment>
<comment type="similarity">
    <text evidence="3">Belongs to the cyclophilin-type PPIase family.</text>
</comment>
<proteinExistence type="inferred from homology"/>
<gene>
    <name type="primary">cyp5</name>
    <name type="ORF">RO3G_06318</name>
</gene>
<name>CYP5_RHIO9</name>
<evidence type="ECO:0000250" key="1"/>
<evidence type="ECO:0000255" key="2">
    <source>
        <dbReference type="PROSITE-ProRule" id="PRU00156"/>
    </source>
</evidence>
<evidence type="ECO:0000305" key="3"/>
<sequence length="176" mass="19021">MAAKNLPKVFFDVAVNGKPSGRLTFKLFSDTVPKTAENFRALCTGEKGTGVSGKPLHYKGSHFHRIIPGFMAQGGDFTMGNGRGGESIYGHKFNDENFTLKHTGKGVLSMANAGPNTNGSQFFITFDKTPWLDGNHTVFGQLVEGNQVLEILEQHGTQSGMPTAKVEIVDCGEIKN</sequence>
<dbReference type="EC" id="5.2.1.8"/>
<dbReference type="EMBL" id="CH476735">
    <property type="protein sequence ID" value="EIE81613.1"/>
    <property type="molecule type" value="Genomic_DNA"/>
</dbReference>
<dbReference type="SMR" id="P0C1I7"/>
<dbReference type="STRING" id="246409.P0C1I7"/>
<dbReference type="VEuPathDB" id="FungiDB:RO3G_06318"/>
<dbReference type="eggNOG" id="KOG0865">
    <property type="taxonomic scope" value="Eukaryota"/>
</dbReference>
<dbReference type="InParanoid" id="P0C1I7"/>
<dbReference type="OMA" id="FTMGNGL"/>
<dbReference type="OrthoDB" id="43128at4827"/>
<dbReference type="Proteomes" id="UP000009138">
    <property type="component" value="Unassembled WGS sequence"/>
</dbReference>
<dbReference type="GO" id="GO:0005737">
    <property type="term" value="C:cytoplasm"/>
    <property type="evidence" value="ECO:0007669"/>
    <property type="project" value="TreeGrafter"/>
</dbReference>
<dbReference type="GO" id="GO:0016018">
    <property type="term" value="F:cyclosporin A binding"/>
    <property type="evidence" value="ECO:0007669"/>
    <property type="project" value="TreeGrafter"/>
</dbReference>
<dbReference type="GO" id="GO:0003755">
    <property type="term" value="F:peptidyl-prolyl cis-trans isomerase activity"/>
    <property type="evidence" value="ECO:0007669"/>
    <property type="project" value="UniProtKB-KW"/>
</dbReference>
<dbReference type="GO" id="GO:0006457">
    <property type="term" value="P:protein folding"/>
    <property type="evidence" value="ECO:0007669"/>
    <property type="project" value="InterPro"/>
</dbReference>
<dbReference type="CDD" id="cd01926">
    <property type="entry name" value="cyclophilin_ABH_like"/>
    <property type="match status" value="1"/>
</dbReference>
<dbReference type="FunFam" id="2.40.100.10:FF:000002">
    <property type="entry name" value="Peptidyl-prolyl cis-trans isomerase"/>
    <property type="match status" value="1"/>
</dbReference>
<dbReference type="Gene3D" id="2.40.100.10">
    <property type="entry name" value="Cyclophilin-like"/>
    <property type="match status" value="1"/>
</dbReference>
<dbReference type="InterPro" id="IPR029000">
    <property type="entry name" value="Cyclophilin-like_dom_sf"/>
</dbReference>
<dbReference type="InterPro" id="IPR024936">
    <property type="entry name" value="Cyclophilin-type_PPIase"/>
</dbReference>
<dbReference type="InterPro" id="IPR020892">
    <property type="entry name" value="Cyclophilin-type_PPIase_CS"/>
</dbReference>
<dbReference type="InterPro" id="IPR002130">
    <property type="entry name" value="Cyclophilin-type_PPIase_dom"/>
</dbReference>
<dbReference type="PANTHER" id="PTHR11071">
    <property type="entry name" value="PEPTIDYL-PROLYL CIS-TRANS ISOMERASE"/>
    <property type="match status" value="1"/>
</dbReference>
<dbReference type="PANTHER" id="PTHR11071:SF561">
    <property type="entry name" value="PEPTIDYL-PROLYL CIS-TRANS ISOMERASE D-RELATED"/>
    <property type="match status" value="1"/>
</dbReference>
<dbReference type="Pfam" id="PF00160">
    <property type="entry name" value="Pro_isomerase"/>
    <property type="match status" value="1"/>
</dbReference>
<dbReference type="PIRSF" id="PIRSF001467">
    <property type="entry name" value="Peptidylpro_ismrse"/>
    <property type="match status" value="1"/>
</dbReference>
<dbReference type="PRINTS" id="PR00153">
    <property type="entry name" value="CSAPPISMRASE"/>
</dbReference>
<dbReference type="SUPFAM" id="SSF50891">
    <property type="entry name" value="Cyclophilin-like"/>
    <property type="match status" value="1"/>
</dbReference>
<dbReference type="PROSITE" id="PS00170">
    <property type="entry name" value="CSA_PPIASE_1"/>
    <property type="match status" value="1"/>
</dbReference>
<dbReference type="PROSITE" id="PS50072">
    <property type="entry name" value="CSA_PPIASE_2"/>
    <property type="match status" value="1"/>
</dbReference>
<organism>
    <name type="scientific">Rhizopus delemar (strain RA 99-880 / ATCC MYA-4621 / FGSC 9543 / NRRL 43880)</name>
    <name type="common">Mucormycosis agent</name>
    <name type="synonym">Rhizopus arrhizus var. delemar</name>
    <dbReference type="NCBI Taxonomy" id="246409"/>
    <lineage>
        <taxon>Eukaryota</taxon>
        <taxon>Fungi</taxon>
        <taxon>Fungi incertae sedis</taxon>
        <taxon>Mucoromycota</taxon>
        <taxon>Mucoromycotina</taxon>
        <taxon>Mucoromycetes</taxon>
        <taxon>Mucorales</taxon>
        <taxon>Mucorineae</taxon>
        <taxon>Rhizopodaceae</taxon>
        <taxon>Rhizopus</taxon>
    </lineage>
</organism>
<feature type="chain" id="PRO_0000244720" description="Peptidyl-prolyl cis-trans isomerase cyp5">
    <location>
        <begin position="1"/>
        <end position="176"/>
    </location>
</feature>
<feature type="domain" description="PPIase cyclophilin-type" evidence="2">
    <location>
        <begin position="10"/>
        <end position="173"/>
    </location>
</feature>
<accession>P0C1I7</accession>
<accession>I1BZI3</accession>
<protein>
    <recommendedName>
        <fullName>Peptidyl-prolyl cis-trans isomerase cyp5</fullName>
        <shortName>PPIase cyp5</shortName>
        <ecNumber>5.2.1.8</ecNumber>
    </recommendedName>
    <alternativeName>
        <fullName>Cyclophilin cyp5</fullName>
    </alternativeName>
    <alternativeName>
        <fullName>Rotamase cyp5</fullName>
    </alternativeName>
</protein>
<keyword id="KW-0413">Isomerase</keyword>
<keyword id="KW-1185">Reference proteome</keyword>
<keyword id="KW-0697">Rotamase</keyword>
<reference key="1">
    <citation type="journal article" date="2009" name="PLoS Genet.">
        <title>Genomic analysis of the basal lineage fungus Rhizopus oryzae reveals a whole-genome duplication.</title>
        <authorList>
            <person name="Ma L.-J."/>
            <person name="Ibrahim A.S."/>
            <person name="Skory C."/>
            <person name="Grabherr M.G."/>
            <person name="Burger G."/>
            <person name="Butler M."/>
            <person name="Elias M."/>
            <person name="Idnurm A."/>
            <person name="Lang B.F."/>
            <person name="Sone T."/>
            <person name="Abe A."/>
            <person name="Calvo S.E."/>
            <person name="Corrochano L.M."/>
            <person name="Engels R."/>
            <person name="Fu J."/>
            <person name="Hansberg W."/>
            <person name="Kim J.-M."/>
            <person name="Kodira C.D."/>
            <person name="Koehrsen M.J."/>
            <person name="Liu B."/>
            <person name="Miranda-Saavedra D."/>
            <person name="O'Leary S."/>
            <person name="Ortiz-Castellanos L."/>
            <person name="Poulter R."/>
            <person name="Rodriguez-Romero J."/>
            <person name="Ruiz-Herrera J."/>
            <person name="Shen Y.-Q."/>
            <person name="Zeng Q."/>
            <person name="Galagan J."/>
            <person name="Birren B.W."/>
            <person name="Cuomo C.A."/>
            <person name="Wickes B.L."/>
        </authorList>
    </citation>
    <scope>NUCLEOTIDE SEQUENCE [LARGE SCALE GENOMIC DNA]</scope>
    <source>
        <strain>RA 99-880 / ATCC MYA-4621 / FGSC 9543 / NRRL 43880</strain>
    </source>
</reference>